<sequence>MIFTMYFFRNFVFLHSFMNYIIKVKSILINRYSLATCNAILLYFFQTNYYKIYLLVNTSLSFYNLIFFLRNFLRIVKKKNDPKVFLLALLIISKNYIQYALYCNFLFQVGNRTLKVIKSVEISKNEILKNDPSLKALEFWKKIKIFYSKNFISKIAVIMVISFSGYCAFNFAFKFFGVLKESSKILASFFSFNHDQKNDNSEDNRSEDDLKSSQDPVNIPSIEQSFKVEDFSIFNPDFWSTDFDKILLEEGYDLEGSLSTLWLTPRTFIVMKRIVQTGFYLSMCVANAYAIAETVKRGQPVSNDMLQFNPTLQTGFVYPYGQSMSAPGQIPGGIWAERLFLKKKCLLHKI</sequence>
<evidence type="ECO:0000256" key="1">
    <source>
        <dbReference type="SAM" id="MobiDB-lite"/>
    </source>
</evidence>
<keyword id="KW-0150">Chloroplast</keyword>
<keyword id="KW-0934">Plastid</keyword>
<name>YCXA_EUGGR</name>
<reference key="1">
    <citation type="journal article" date="1993" name="Nucleic Acids Res.">
        <title>Complete sequence of Euglena gracilis chloroplast DNA.</title>
        <authorList>
            <person name="Hallick R.B."/>
            <person name="Hong L."/>
            <person name="Drager R.G."/>
            <person name="Favreau M.R."/>
            <person name="Monfort A."/>
            <person name="Orsat B."/>
            <person name="Spielmann A."/>
            <person name="Stutz E."/>
        </authorList>
    </citation>
    <scope>NUCLEOTIDE SEQUENCE [LARGE SCALE GENOMIC DNA]</scope>
    <source>
        <strain>Z / UTEX 753</strain>
    </source>
</reference>
<reference key="2">
    <citation type="journal article" date="1984" name="Curr. Genet.">
        <title>The Euglena gracilis chloroplast genome: structural features of a DNA region possibly carrying the single origin of DNA replication.</title>
        <authorList>
            <person name="Schlunegger B."/>
            <person name="Stutz E."/>
        </authorList>
    </citation>
    <scope>NUCLEOTIDE SEQUENCE [GENOMIC DNA]</scope>
    <source>
        <strain>Z / UTEX 753</strain>
    </source>
</reference>
<accession>P31561</accession>
<organism>
    <name type="scientific">Euglena gracilis</name>
    <dbReference type="NCBI Taxonomy" id="3039"/>
    <lineage>
        <taxon>Eukaryota</taxon>
        <taxon>Discoba</taxon>
        <taxon>Euglenozoa</taxon>
        <taxon>Euglenida</taxon>
        <taxon>Spirocuta</taxon>
        <taxon>Euglenophyceae</taxon>
        <taxon>Euglenales</taxon>
        <taxon>Euglenaceae</taxon>
        <taxon>Euglena</taxon>
    </lineage>
</organism>
<dbReference type="EMBL" id="Z11874">
    <property type="status" value="NOT_ANNOTATED_CDS"/>
    <property type="molecule type" value="Genomic_DNA"/>
</dbReference>
<dbReference type="EMBL" id="X70810">
    <property type="protein sequence ID" value="CAA50140.1"/>
    <property type="molecule type" value="Genomic_DNA"/>
</dbReference>
<dbReference type="PIR" id="S34557">
    <property type="entry name" value="S34557"/>
</dbReference>
<dbReference type="RefSeq" id="NP_041953.1">
    <property type="nucleotide sequence ID" value="NC_001603.2"/>
</dbReference>
<dbReference type="GeneID" id="1457331"/>
<dbReference type="GO" id="GO:0009507">
    <property type="term" value="C:chloroplast"/>
    <property type="evidence" value="ECO:0007669"/>
    <property type="project" value="UniProtKB-SubCell"/>
</dbReference>
<proteinExistence type="predicted"/>
<feature type="chain" id="PRO_0000217441" description="Uncharacterized 40.9 kDa protein in 16S rRNA 3'region">
    <location>
        <begin position="1"/>
        <end position="350"/>
    </location>
</feature>
<feature type="region of interest" description="Disordered" evidence="1">
    <location>
        <begin position="197"/>
        <end position="217"/>
    </location>
</feature>
<feature type="compositionally biased region" description="Basic and acidic residues" evidence="1">
    <location>
        <begin position="197"/>
        <end position="212"/>
    </location>
</feature>
<protein>
    <recommendedName>
        <fullName>Uncharacterized 40.9 kDa protein in 16S rRNA 3'region</fullName>
    </recommendedName>
    <alternativeName>
        <fullName>ORF350</fullName>
    </alternativeName>
</protein>
<comment type="subcellular location">
    <subcellularLocation>
        <location>Plastid</location>
        <location>Chloroplast</location>
    </subcellularLocation>
</comment>
<geneLocation type="chloroplast"/>